<accession>P26730</accession>
<accession>P07230</accession>
<feature type="signal peptide" evidence="2">
    <location>
        <begin position="1"/>
        <end position="19"/>
    </location>
</feature>
<feature type="peptide" id="PRO_0000015980" description="Bombyxin A-7 B chain">
    <location>
        <begin position="20"/>
        <end position="47"/>
    </location>
</feature>
<feature type="propeptide" id="PRO_0000015981" description="C peptide like">
    <location>
        <begin position="50"/>
        <end position="70"/>
    </location>
</feature>
<feature type="peptide" id="PRO_0000015982" description="Bombyxin A-7 A chain">
    <location>
        <begin position="73"/>
        <end position="92"/>
    </location>
</feature>
<feature type="modified residue" description="Pyrrolidone carboxylic acid" evidence="2">
    <location>
        <position position="20"/>
    </location>
</feature>
<feature type="disulfide bond" description="Interchain (between B and A chains)" evidence="1">
    <location>
        <begin position="29"/>
        <end position="79"/>
    </location>
</feature>
<feature type="disulfide bond" description="Interchain (between B and A chains)" evidence="1">
    <location>
        <begin position="41"/>
        <end position="92"/>
    </location>
</feature>
<feature type="disulfide bond" evidence="1">
    <location>
        <begin position="78"/>
        <end position="83"/>
    </location>
</feature>
<feature type="sequence variant">
    <original>Y</original>
    <variation>F</variation>
    <location>
        <position position="54"/>
    </location>
</feature>
<keyword id="KW-0165">Cleavage on pair of basic residues</keyword>
<keyword id="KW-0903">Direct protein sequencing</keyword>
<keyword id="KW-1015">Disulfide bond</keyword>
<keyword id="KW-0372">Hormone</keyword>
<keyword id="KW-0873">Pyrrolidone carboxylic acid</keyword>
<keyword id="KW-1185">Reference proteome</keyword>
<keyword id="KW-0964">Secreted</keyword>
<keyword id="KW-0732">Signal</keyword>
<protein>
    <recommendedName>
        <fullName>Bombyxin A-7</fullName>
        <shortName>BBX-A7</shortName>
    </recommendedName>
    <alternativeName>
        <fullName>4K-prothoracicotropic hormone</fullName>
        <shortName>4K-PTTH</shortName>
    </alternativeName>
    <component>
        <recommendedName>
            <fullName>Bombyxin A-7 B chain</fullName>
        </recommendedName>
    </component>
    <component>
        <recommendedName>
            <fullName>Bombyxin A-7 A chain</fullName>
        </recommendedName>
    </component>
</protein>
<gene>
    <name type="primary">BBXA7</name>
</gene>
<comment type="function">
    <text>Brain peptide responsible for activation of prothoracic glands to produce ecdysone in insects.</text>
</comment>
<comment type="subunit">
    <text>Heterodimer of a B chain and an A chain linked by two disulfide bonds.</text>
</comment>
<comment type="subcellular location">
    <subcellularLocation>
        <location>Secreted</location>
    </subcellularLocation>
</comment>
<comment type="miscellaneous">
    <text>Silk worm has two kinds of PTTH: 4K-PTTH and 22K-PTTH; there are many forms of 4K-PTTH.</text>
</comment>
<comment type="similarity">
    <text evidence="3">Belongs to the insulin family.</text>
</comment>
<name>BXA7_BOMMO</name>
<dbReference type="EMBL" id="D00772">
    <property type="protein sequence ID" value="BAA00668.1"/>
    <property type="molecule type" value="Genomic_DNA"/>
</dbReference>
<dbReference type="EMBL" id="D00773">
    <property type="protein sequence ID" value="BAA00669.1"/>
    <property type="molecule type" value="Genomic_DNA"/>
</dbReference>
<dbReference type="PIR" id="S69481">
    <property type="entry name" value="S69481"/>
</dbReference>
<dbReference type="PIR" id="S69482">
    <property type="entry name" value="S69482"/>
</dbReference>
<dbReference type="RefSeq" id="NP_001121629.1">
    <property type="nucleotide sequence ID" value="NM_001128157.1"/>
</dbReference>
<dbReference type="SMR" id="P26730"/>
<dbReference type="FunCoup" id="P26730">
    <property type="interactions" value="162"/>
</dbReference>
<dbReference type="STRING" id="7091.P26730"/>
<dbReference type="PaxDb" id="7091-BGIBMGA011929-TA"/>
<dbReference type="GeneID" id="100169708"/>
<dbReference type="KEGG" id="bmor:100169708"/>
<dbReference type="CTD" id="100169708"/>
<dbReference type="HOGENOM" id="CLU_125164_2_0_1"/>
<dbReference type="InParanoid" id="P26730"/>
<dbReference type="Proteomes" id="UP000005204">
    <property type="component" value="Unassembled WGS sequence"/>
</dbReference>
<dbReference type="GO" id="GO:0005615">
    <property type="term" value="C:extracellular space"/>
    <property type="evidence" value="ECO:0007669"/>
    <property type="project" value="InterPro"/>
</dbReference>
<dbReference type="GO" id="GO:0008083">
    <property type="term" value="F:growth factor activity"/>
    <property type="evidence" value="ECO:0007669"/>
    <property type="project" value="InterPro"/>
</dbReference>
<dbReference type="GO" id="GO:0005179">
    <property type="term" value="F:hormone activity"/>
    <property type="evidence" value="ECO:0007669"/>
    <property type="project" value="UniProtKB-KW"/>
</dbReference>
<dbReference type="CDD" id="cd04366">
    <property type="entry name" value="IlGF_insulin_bombyxin_like"/>
    <property type="match status" value="1"/>
</dbReference>
<dbReference type="Gene3D" id="1.10.100.10">
    <property type="entry name" value="Insulin-like"/>
    <property type="match status" value="1"/>
</dbReference>
<dbReference type="InterPro" id="IPR017097">
    <property type="entry name" value="Bombyxin"/>
</dbReference>
<dbReference type="InterPro" id="IPR030680">
    <property type="entry name" value="Bombyxin_A"/>
</dbReference>
<dbReference type="InterPro" id="IPR016179">
    <property type="entry name" value="Insulin-like"/>
</dbReference>
<dbReference type="InterPro" id="IPR036438">
    <property type="entry name" value="Insulin-like_sf"/>
</dbReference>
<dbReference type="InterPro" id="IPR022353">
    <property type="entry name" value="Insulin_CS"/>
</dbReference>
<dbReference type="InterPro" id="IPR022352">
    <property type="entry name" value="Insulin_family"/>
</dbReference>
<dbReference type="PANTHER" id="PTHR13647:SF4">
    <property type="entry name" value="INSULIN-LIKE PEPTIDE 1-RELATED"/>
    <property type="match status" value="1"/>
</dbReference>
<dbReference type="PANTHER" id="PTHR13647">
    <property type="entry name" value="INSULIN-LIKE PEPTIDE 2-RELATED"/>
    <property type="match status" value="1"/>
</dbReference>
<dbReference type="Pfam" id="PF00049">
    <property type="entry name" value="Insulin"/>
    <property type="match status" value="1"/>
</dbReference>
<dbReference type="PIRSF" id="PIRSF037038">
    <property type="entry name" value="Bombyxin"/>
    <property type="match status" value="1"/>
</dbReference>
<dbReference type="PIRSF" id="PIRSF500312">
    <property type="entry name" value="Bombyxin_A"/>
    <property type="match status" value="1"/>
</dbReference>
<dbReference type="PRINTS" id="PR02003">
    <property type="entry name" value="BOMBYXIN"/>
</dbReference>
<dbReference type="PRINTS" id="PR00276">
    <property type="entry name" value="INSULINFAMLY"/>
</dbReference>
<dbReference type="SMART" id="SM00078">
    <property type="entry name" value="IlGF"/>
    <property type="match status" value="1"/>
</dbReference>
<dbReference type="SUPFAM" id="SSF56994">
    <property type="entry name" value="Insulin-like"/>
    <property type="match status" value="1"/>
</dbReference>
<dbReference type="PROSITE" id="PS00262">
    <property type="entry name" value="INSULIN"/>
    <property type="match status" value="1"/>
</dbReference>
<sequence>MKLLLAIALMLTIVMWVSTQQPQAVHTYCGRHLARTLADLCWEAGVDKRSDAQYASYGSAWLMPYSEGRGKRGIVDECCLRPCSVDVLLSYC</sequence>
<organism>
    <name type="scientific">Bombyx mori</name>
    <name type="common">Silk moth</name>
    <dbReference type="NCBI Taxonomy" id="7091"/>
    <lineage>
        <taxon>Eukaryota</taxon>
        <taxon>Metazoa</taxon>
        <taxon>Ecdysozoa</taxon>
        <taxon>Arthropoda</taxon>
        <taxon>Hexapoda</taxon>
        <taxon>Insecta</taxon>
        <taxon>Pterygota</taxon>
        <taxon>Neoptera</taxon>
        <taxon>Endopterygota</taxon>
        <taxon>Lepidoptera</taxon>
        <taxon>Glossata</taxon>
        <taxon>Ditrysia</taxon>
        <taxon>Bombycoidea</taxon>
        <taxon>Bombycidae</taxon>
        <taxon>Bombycinae</taxon>
        <taxon>Bombyx</taxon>
    </lineage>
</organism>
<reference key="1">
    <citation type="journal article" date="1996" name="J. Mol. Biol.">
        <title>Multiple gene copies for bombyxin, an insulin-related peptide of the silkmoth Bombyx mori: structural signs for gene rearrangement and duplication responsible for generation of multiple molecular forms of bombyxin.</title>
        <authorList>
            <person name="Kondo H."/>
            <person name="Ino M."/>
            <person name="Suzuki A."/>
            <person name="Ishizaki H."/>
            <person name="Iwami M."/>
        </authorList>
    </citation>
    <scope>NUCLEOTIDE SEQUENCE [GENOMIC DNA]</scope>
</reference>
<reference key="2">
    <citation type="journal article" date="1986" name="Proc. Natl. Acad. Sci. U.S.A.">
        <title>Amino acid sequence of a prothoracicotropic hormone of the silkworm Bombyx mori.</title>
        <authorList>
            <person name="Nagasawa H."/>
            <person name="Kataoka H."/>
            <person name="Isogai A."/>
            <person name="Tamura S."/>
            <person name="Suzuki A."/>
            <person name="Mizoguchi A."/>
            <person name="Fujiwara Y."/>
            <person name="Suzuki A."/>
            <person name="Takahashi S.Y."/>
            <person name="Ishizaki H."/>
        </authorList>
    </citation>
    <scope>PROTEIN SEQUENCE OF 20-47 AND 73-92</scope>
    <scope>PYROGLUTAMATE FORMATION AT GLN-20</scope>
</reference>
<proteinExistence type="evidence at protein level"/>
<evidence type="ECO:0000250" key="1"/>
<evidence type="ECO:0000269" key="2">
    <source>
    </source>
</evidence>
<evidence type="ECO:0000305" key="3"/>